<comment type="function">
    <text evidence="1">Together with its co-chaperonin GroES, plays an essential role in assisting protein folding. The GroEL-GroES system forms a nano-cage that allows encapsulation of the non-native substrate proteins and provides a physical environment optimized to promote and accelerate protein folding.</text>
</comment>
<comment type="catalytic activity">
    <reaction evidence="1">
        <text>ATP + H2O + a folded polypeptide = ADP + phosphate + an unfolded polypeptide.</text>
        <dbReference type="EC" id="5.6.1.7"/>
    </reaction>
</comment>
<comment type="subunit">
    <text evidence="1">Forms a cylinder of 14 subunits composed of two heptameric rings stacked back-to-back. Interacts with the co-chaperonin GroES.</text>
</comment>
<comment type="subcellular location">
    <subcellularLocation>
        <location evidence="1">Cytoplasm</location>
    </subcellularLocation>
</comment>
<comment type="similarity">
    <text evidence="1">Belongs to the chaperonin (HSP60) family.</text>
</comment>
<dbReference type="EC" id="5.6.1.7" evidence="1"/>
<dbReference type="EMBL" id="M76658">
    <property type="protein sequence ID" value="AAA26754.1"/>
    <property type="molecule type" value="Genomic_DNA"/>
</dbReference>
<dbReference type="PIR" id="C41325">
    <property type="entry name" value="C41325"/>
</dbReference>
<dbReference type="SMR" id="Q00768"/>
<dbReference type="GO" id="GO:0005737">
    <property type="term" value="C:cytoplasm"/>
    <property type="evidence" value="ECO:0007669"/>
    <property type="project" value="UniProtKB-SubCell"/>
</dbReference>
<dbReference type="GO" id="GO:0005524">
    <property type="term" value="F:ATP binding"/>
    <property type="evidence" value="ECO:0007669"/>
    <property type="project" value="UniProtKB-UniRule"/>
</dbReference>
<dbReference type="GO" id="GO:0140662">
    <property type="term" value="F:ATP-dependent protein folding chaperone"/>
    <property type="evidence" value="ECO:0007669"/>
    <property type="project" value="InterPro"/>
</dbReference>
<dbReference type="GO" id="GO:0016853">
    <property type="term" value="F:isomerase activity"/>
    <property type="evidence" value="ECO:0007669"/>
    <property type="project" value="UniProtKB-KW"/>
</dbReference>
<dbReference type="GO" id="GO:0051082">
    <property type="term" value="F:unfolded protein binding"/>
    <property type="evidence" value="ECO:0007669"/>
    <property type="project" value="UniProtKB-UniRule"/>
</dbReference>
<dbReference type="GO" id="GO:0042026">
    <property type="term" value="P:protein refolding"/>
    <property type="evidence" value="ECO:0007669"/>
    <property type="project" value="UniProtKB-UniRule"/>
</dbReference>
<dbReference type="CDD" id="cd03344">
    <property type="entry name" value="GroEL"/>
    <property type="match status" value="1"/>
</dbReference>
<dbReference type="FunFam" id="3.50.7.10:FF:000001">
    <property type="entry name" value="60 kDa chaperonin"/>
    <property type="match status" value="1"/>
</dbReference>
<dbReference type="Gene3D" id="3.50.7.10">
    <property type="entry name" value="GroEL"/>
    <property type="match status" value="1"/>
</dbReference>
<dbReference type="Gene3D" id="1.10.560.10">
    <property type="entry name" value="GroEL-like equatorial domain"/>
    <property type="match status" value="1"/>
</dbReference>
<dbReference type="Gene3D" id="3.30.260.10">
    <property type="entry name" value="TCP-1-like chaperonin intermediate domain"/>
    <property type="match status" value="1"/>
</dbReference>
<dbReference type="HAMAP" id="MF_00600">
    <property type="entry name" value="CH60"/>
    <property type="match status" value="1"/>
</dbReference>
<dbReference type="InterPro" id="IPR018370">
    <property type="entry name" value="Chaperonin_Cpn60_CS"/>
</dbReference>
<dbReference type="InterPro" id="IPR001844">
    <property type="entry name" value="Cpn60/GroEL"/>
</dbReference>
<dbReference type="InterPro" id="IPR002423">
    <property type="entry name" value="Cpn60/GroEL/TCP-1"/>
</dbReference>
<dbReference type="InterPro" id="IPR027409">
    <property type="entry name" value="GroEL-like_apical_dom_sf"/>
</dbReference>
<dbReference type="InterPro" id="IPR027413">
    <property type="entry name" value="GROEL-like_equatorial_sf"/>
</dbReference>
<dbReference type="InterPro" id="IPR027410">
    <property type="entry name" value="TCP-1-like_intermed_sf"/>
</dbReference>
<dbReference type="NCBIfam" id="TIGR02348">
    <property type="entry name" value="GroEL"/>
    <property type="match status" value="1"/>
</dbReference>
<dbReference type="NCBIfam" id="NF000592">
    <property type="entry name" value="PRK00013.1"/>
    <property type="match status" value="1"/>
</dbReference>
<dbReference type="NCBIfam" id="NF009487">
    <property type="entry name" value="PRK12849.1"/>
    <property type="match status" value="1"/>
</dbReference>
<dbReference type="NCBIfam" id="NF009488">
    <property type="entry name" value="PRK12850.1"/>
    <property type="match status" value="1"/>
</dbReference>
<dbReference type="NCBIfam" id="NF009489">
    <property type="entry name" value="PRK12851.1"/>
    <property type="match status" value="1"/>
</dbReference>
<dbReference type="PANTHER" id="PTHR45633">
    <property type="entry name" value="60 KDA HEAT SHOCK PROTEIN, MITOCHONDRIAL"/>
    <property type="match status" value="1"/>
</dbReference>
<dbReference type="Pfam" id="PF00118">
    <property type="entry name" value="Cpn60_TCP1"/>
    <property type="match status" value="1"/>
</dbReference>
<dbReference type="PRINTS" id="PR00298">
    <property type="entry name" value="CHAPERONIN60"/>
</dbReference>
<dbReference type="SUPFAM" id="SSF52029">
    <property type="entry name" value="GroEL apical domain-like"/>
    <property type="match status" value="1"/>
</dbReference>
<dbReference type="SUPFAM" id="SSF48592">
    <property type="entry name" value="GroEL equatorial domain-like"/>
    <property type="match status" value="1"/>
</dbReference>
<dbReference type="SUPFAM" id="SSF54849">
    <property type="entry name" value="GroEL-intermediate domain like"/>
    <property type="match status" value="1"/>
</dbReference>
<dbReference type="PROSITE" id="PS00296">
    <property type="entry name" value="CHAPERONINS_CPN60"/>
    <property type="match status" value="1"/>
</dbReference>
<reference key="1">
    <citation type="journal article" date="1991" name="J. Bacteriol.">
        <title>Characterization of the groEL-like genes in Streptomyces albus.</title>
        <authorList>
            <person name="Mazodier P."/>
            <person name="Guglielmi G."/>
            <person name="Davies J."/>
            <person name="Thompson C.J."/>
        </authorList>
    </citation>
    <scope>NUCLEOTIDE SEQUENCE [GENOMIC DNA]</scope>
</reference>
<reference key="2">
    <citation type="journal article" date="1991" name="J. Bacteriol.">
        <title>A survey of the heat shock response in four Streptomyces species reveals two groEL-like genes and three groEL-like proteins in Streptomyces albus.</title>
        <authorList>
            <person name="Guglielmi G."/>
            <person name="Mazodier P."/>
            <person name="Thompson C.J."/>
            <person name="Davies J."/>
        </authorList>
    </citation>
    <scope>PROTEIN SEQUENCE OF 2-11</scope>
</reference>
<feature type="initiator methionine" description="Removed" evidence="2">
    <location>
        <position position="1"/>
    </location>
</feature>
<feature type="chain" id="PRO_0000063545" description="Chaperonin GroEL 2">
    <location>
        <begin position="2"/>
        <end position="540"/>
    </location>
</feature>
<feature type="binding site" evidence="1">
    <location>
        <begin position="29"/>
        <end position="32"/>
    </location>
    <ligand>
        <name>ATP</name>
        <dbReference type="ChEBI" id="CHEBI:30616"/>
    </ligand>
</feature>
<feature type="binding site" evidence="1">
    <location>
        <begin position="86"/>
        <end position="90"/>
    </location>
    <ligand>
        <name>ATP</name>
        <dbReference type="ChEBI" id="CHEBI:30616"/>
    </ligand>
</feature>
<feature type="binding site" evidence="1">
    <location>
        <position position="413"/>
    </location>
    <ligand>
        <name>ATP</name>
        <dbReference type="ChEBI" id="CHEBI:30616"/>
    </ligand>
</feature>
<feature type="binding site" evidence="1">
    <location>
        <begin position="476"/>
        <end position="478"/>
    </location>
    <ligand>
        <name>ATP</name>
        <dbReference type="ChEBI" id="CHEBI:30616"/>
    </ligand>
</feature>
<feature type="binding site" evidence="1">
    <location>
        <position position="492"/>
    </location>
    <ligand>
        <name>ATP</name>
        <dbReference type="ChEBI" id="CHEBI:30616"/>
    </ligand>
</feature>
<name>CH602_STRAL</name>
<accession>Q00768</accession>
<evidence type="ECO:0000255" key="1">
    <source>
        <dbReference type="HAMAP-Rule" id="MF_00600"/>
    </source>
</evidence>
<evidence type="ECO:0000269" key="2">
    <source>
    </source>
</evidence>
<proteinExistence type="evidence at protein level"/>
<organism>
    <name type="scientific">Streptomyces albus G</name>
    <dbReference type="NCBI Taxonomy" id="1962"/>
    <lineage>
        <taxon>Bacteria</taxon>
        <taxon>Bacillati</taxon>
        <taxon>Actinomycetota</taxon>
        <taxon>Actinomycetes</taxon>
        <taxon>Kitasatosporales</taxon>
        <taxon>Streptomycetaceae</taxon>
        <taxon>Streptomyces</taxon>
    </lineage>
</organism>
<keyword id="KW-0067">ATP-binding</keyword>
<keyword id="KW-0143">Chaperone</keyword>
<keyword id="KW-0963">Cytoplasm</keyword>
<keyword id="KW-0903">Direct protein sequencing</keyword>
<keyword id="KW-0413">Isomerase</keyword>
<keyword id="KW-0547">Nucleotide-binding</keyword>
<sequence>MAKIIAFDEEARRGLERGMNQLADAVKVTLGPKGRNVVLEKKWGAPTITNDGVSIAKEIELEDPYEKIGAELVKEVAKKTDDVAGDGTTTATVLAQALVREGLRNVAAGANPMALKRGIEKAVEAVSSALLEQAKDVETKEQIASTASISAADTQIGELIAEAMDKVGKEGVITVEESQTFGLELELTEGMRFDKGYISAYFATDMERMEASLDDPYILIVNSKIGNVKDLLPLLEKVMQSGKPLLIIAEDVEGEALSTLVVNKIRGTFKSVAVKAPGFGDRRKAMLGDIAILTGGTVISEEVGLKLENAGLDLLGRARKVVITKDETTIVDGAGDTDQVNGRVAQIRAEIENSDSDYDREKLQERLANVAGGVAVIKAGAATEVELKERKHRIEDAVRNAKAAVEEGIVAGGGVALLQASSVFEKLELEGDEATGAAAVKLALEAPLKQIAVNGGLEGGVVVEKVRNLSVGHGLNAATGQYVDMIAEGILDPAKVTRSALQNAASIAALFLTTEAVIADKPEKAAAAAPGGMPGGDMDF</sequence>
<protein>
    <recommendedName>
        <fullName evidence="1">Chaperonin GroEL 2</fullName>
        <ecNumber evidence="1">5.6.1.7</ecNumber>
    </recommendedName>
    <alternativeName>
        <fullName evidence="1">60 kDa chaperonin 2</fullName>
    </alternativeName>
    <alternativeName>
        <fullName evidence="1">Chaperonin-60 2</fullName>
        <shortName evidence="1">Cpn60 2</shortName>
    </alternativeName>
    <alternativeName>
        <fullName>HSP56</fullName>
    </alternativeName>
</protein>
<gene>
    <name evidence="1" type="primary">groEL2</name>
    <name evidence="1" type="synonym">groL2</name>
</gene>